<accession>P61333</accession>
<dbReference type="EMBL" id="AE017180">
    <property type="protein sequence ID" value="AAR35296.1"/>
    <property type="molecule type" value="Genomic_DNA"/>
</dbReference>
<dbReference type="RefSeq" id="NP_952969.1">
    <property type="nucleotide sequence ID" value="NC_002939.5"/>
</dbReference>
<dbReference type="RefSeq" id="WP_010942565.1">
    <property type="nucleotide sequence ID" value="NC_002939.5"/>
</dbReference>
<dbReference type="SMR" id="P61333"/>
<dbReference type="FunCoup" id="P61333">
    <property type="interactions" value="568"/>
</dbReference>
<dbReference type="STRING" id="243231.GSU1920"/>
<dbReference type="EnsemblBacteria" id="AAR35296">
    <property type="protein sequence ID" value="AAR35296"/>
    <property type="gene ID" value="GSU1920"/>
</dbReference>
<dbReference type="KEGG" id="gsu:GSU1920"/>
<dbReference type="PATRIC" id="fig|243231.5.peg.1958"/>
<dbReference type="eggNOG" id="COG0264">
    <property type="taxonomic scope" value="Bacteria"/>
</dbReference>
<dbReference type="HOGENOM" id="CLU_047155_1_1_7"/>
<dbReference type="InParanoid" id="P61333"/>
<dbReference type="OrthoDB" id="9808348at2"/>
<dbReference type="Proteomes" id="UP000000577">
    <property type="component" value="Chromosome"/>
</dbReference>
<dbReference type="GO" id="GO:0005737">
    <property type="term" value="C:cytoplasm"/>
    <property type="evidence" value="ECO:0007669"/>
    <property type="project" value="UniProtKB-SubCell"/>
</dbReference>
<dbReference type="GO" id="GO:0003746">
    <property type="term" value="F:translation elongation factor activity"/>
    <property type="evidence" value="ECO:0000318"/>
    <property type="project" value="GO_Central"/>
</dbReference>
<dbReference type="GO" id="GO:0006414">
    <property type="term" value="P:translational elongation"/>
    <property type="evidence" value="ECO:0000318"/>
    <property type="project" value="GO_Central"/>
</dbReference>
<dbReference type="CDD" id="cd14275">
    <property type="entry name" value="UBA_EF-Ts"/>
    <property type="match status" value="1"/>
</dbReference>
<dbReference type="FunFam" id="1.10.286.20:FF:000001">
    <property type="entry name" value="Elongation factor Ts"/>
    <property type="match status" value="1"/>
</dbReference>
<dbReference type="FunFam" id="1.10.8.10:FF:000001">
    <property type="entry name" value="Elongation factor Ts"/>
    <property type="match status" value="1"/>
</dbReference>
<dbReference type="Gene3D" id="1.10.286.20">
    <property type="match status" value="1"/>
</dbReference>
<dbReference type="Gene3D" id="1.10.8.10">
    <property type="entry name" value="DNA helicase RuvA subunit, C-terminal domain"/>
    <property type="match status" value="1"/>
</dbReference>
<dbReference type="Gene3D" id="3.30.479.20">
    <property type="entry name" value="Elongation factor Ts, dimerisation domain"/>
    <property type="match status" value="1"/>
</dbReference>
<dbReference type="HAMAP" id="MF_00050">
    <property type="entry name" value="EF_Ts"/>
    <property type="match status" value="1"/>
</dbReference>
<dbReference type="InterPro" id="IPR036402">
    <property type="entry name" value="EF-Ts_dimer_sf"/>
</dbReference>
<dbReference type="InterPro" id="IPR001816">
    <property type="entry name" value="Transl_elong_EFTs/EF1B"/>
</dbReference>
<dbReference type="InterPro" id="IPR014039">
    <property type="entry name" value="Transl_elong_EFTs/EF1B_dimer"/>
</dbReference>
<dbReference type="InterPro" id="IPR018101">
    <property type="entry name" value="Transl_elong_Ts_CS"/>
</dbReference>
<dbReference type="InterPro" id="IPR009060">
    <property type="entry name" value="UBA-like_sf"/>
</dbReference>
<dbReference type="NCBIfam" id="TIGR00116">
    <property type="entry name" value="tsf"/>
    <property type="match status" value="2"/>
</dbReference>
<dbReference type="PANTHER" id="PTHR11741">
    <property type="entry name" value="ELONGATION FACTOR TS"/>
    <property type="match status" value="1"/>
</dbReference>
<dbReference type="PANTHER" id="PTHR11741:SF0">
    <property type="entry name" value="ELONGATION FACTOR TS, MITOCHONDRIAL"/>
    <property type="match status" value="1"/>
</dbReference>
<dbReference type="Pfam" id="PF00889">
    <property type="entry name" value="EF_TS"/>
    <property type="match status" value="2"/>
</dbReference>
<dbReference type="SUPFAM" id="SSF54713">
    <property type="entry name" value="Elongation factor Ts (EF-Ts), dimerisation domain"/>
    <property type="match status" value="1"/>
</dbReference>
<dbReference type="SUPFAM" id="SSF46934">
    <property type="entry name" value="UBA-like"/>
    <property type="match status" value="1"/>
</dbReference>
<dbReference type="PROSITE" id="PS01126">
    <property type="entry name" value="EF_TS_1"/>
    <property type="match status" value="1"/>
</dbReference>
<dbReference type="PROSITE" id="PS01127">
    <property type="entry name" value="EF_TS_2"/>
    <property type="match status" value="1"/>
</dbReference>
<gene>
    <name evidence="1" type="primary">tsf</name>
    <name type="ordered locus">GSU1920</name>
</gene>
<evidence type="ECO:0000255" key="1">
    <source>
        <dbReference type="HAMAP-Rule" id="MF_00050"/>
    </source>
</evidence>
<name>EFTS_GEOSL</name>
<proteinExistence type="inferred from homology"/>
<protein>
    <recommendedName>
        <fullName evidence="1">Elongation factor Ts</fullName>
        <shortName evidence="1">EF-Ts</shortName>
    </recommendedName>
</protein>
<comment type="function">
    <text evidence="1">Associates with the EF-Tu.GDP complex and induces the exchange of GDP to GTP. It remains bound to the aminoacyl-tRNA.EF-Tu.GTP complex up to the GTP hydrolysis stage on the ribosome.</text>
</comment>
<comment type="subcellular location">
    <subcellularLocation>
        <location evidence="1">Cytoplasm</location>
    </subcellularLocation>
</comment>
<comment type="similarity">
    <text evidence="1">Belongs to the EF-Ts family.</text>
</comment>
<sequence length="216" mass="23689">MSITAAQVNELRKITGAGLMDCKKALTETNGDLEQAVDYLRKKGLAAASKKAGRAATEGAVGSYIHAGGKIGVLVEVNCETDFVARNDNFQAFVKDIAMHIAAASPQYVRREEVPAELLEREKEIYRAKARETGKPENIIEKIIEGQINKFYAEICLMEQNFVKDPDKTVQQFLNETISSIGENMSVRRFARFVLGEGLEKKESDFAAEVAAAAGL</sequence>
<reference key="1">
    <citation type="journal article" date="2003" name="Science">
        <title>Genome of Geobacter sulfurreducens: metal reduction in subsurface environments.</title>
        <authorList>
            <person name="Methe B.A."/>
            <person name="Nelson K.E."/>
            <person name="Eisen J.A."/>
            <person name="Paulsen I.T."/>
            <person name="Nelson W.C."/>
            <person name="Heidelberg J.F."/>
            <person name="Wu D."/>
            <person name="Wu M."/>
            <person name="Ward N.L."/>
            <person name="Beanan M.J."/>
            <person name="Dodson R.J."/>
            <person name="Madupu R."/>
            <person name="Brinkac L.M."/>
            <person name="Daugherty S.C."/>
            <person name="DeBoy R.T."/>
            <person name="Durkin A.S."/>
            <person name="Gwinn M.L."/>
            <person name="Kolonay J.F."/>
            <person name="Sullivan S.A."/>
            <person name="Haft D.H."/>
            <person name="Selengut J."/>
            <person name="Davidsen T.M."/>
            <person name="Zafar N."/>
            <person name="White O."/>
            <person name="Tran B."/>
            <person name="Romero C."/>
            <person name="Forberger H.A."/>
            <person name="Weidman J.F."/>
            <person name="Khouri H.M."/>
            <person name="Feldblyum T.V."/>
            <person name="Utterback T.R."/>
            <person name="Van Aken S.E."/>
            <person name="Lovley D.R."/>
            <person name="Fraser C.M."/>
        </authorList>
    </citation>
    <scope>NUCLEOTIDE SEQUENCE [LARGE SCALE GENOMIC DNA]</scope>
    <source>
        <strain>ATCC 51573 / DSM 12127 / PCA</strain>
    </source>
</reference>
<feature type="chain" id="PRO_0000161125" description="Elongation factor Ts">
    <location>
        <begin position="1"/>
        <end position="216"/>
    </location>
</feature>
<feature type="region of interest" description="Involved in Mg(2+) ion dislocation from EF-Tu" evidence="1">
    <location>
        <begin position="81"/>
        <end position="84"/>
    </location>
</feature>
<keyword id="KW-0963">Cytoplasm</keyword>
<keyword id="KW-0251">Elongation factor</keyword>
<keyword id="KW-0648">Protein biosynthesis</keyword>
<keyword id="KW-1185">Reference proteome</keyword>
<organism>
    <name type="scientific">Geobacter sulfurreducens (strain ATCC 51573 / DSM 12127 / PCA)</name>
    <dbReference type="NCBI Taxonomy" id="243231"/>
    <lineage>
        <taxon>Bacteria</taxon>
        <taxon>Pseudomonadati</taxon>
        <taxon>Thermodesulfobacteriota</taxon>
        <taxon>Desulfuromonadia</taxon>
        <taxon>Geobacterales</taxon>
        <taxon>Geobacteraceae</taxon>
        <taxon>Geobacter</taxon>
    </lineage>
</organism>